<proteinExistence type="inferred from homology"/>
<organism>
    <name type="scientific">Nostoc punctiforme (strain ATCC 29133 / PCC 73102)</name>
    <dbReference type="NCBI Taxonomy" id="63737"/>
    <lineage>
        <taxon>Bacteria</taxon>
        <taxon>Bacillati</taxon>
        <taxon>Cyanobacteriota</taxon>
        <taxon>Cyanophyceae</taxon>
        <taxon>Nostocales</taxon>
        <taxon>Nostocaceae</taxon>
        <taxon>Nostoc</taxon>
    </lineage>
</organism>
<dbReference type="EC" id="1.2.1.41" evidence="1"/>
<dbReference type="EMBL" id="CP001037">
    <property type="protein sequence ID" value="ACC84731.1"/>
    <property type="molecule type" value="Genomic_DNA"/>
</dbReference>
<dbReference type="RefSeq" id="WP_012412667.1">
    <property type="nucleotide sequence ID" value="NC_010628.1"/>
</dbReference>
<dbReference type="SMR" id="B2IZ89"/>
<dbReference type="STRING" id="63737.Npun_R6463"/>
<dbReference type="EnsemblBacteria" id="ACC84731">
    <property type="protein sequence ID" value="ACC84731"/>
    <property type="gene ID" value="Npun_R6463"/>
</dbReference>
<dbReference type="KEGG" id="npu:Npun_R6463"/>
<dbReference type="eggNOG" id="COG0014">
    <property type="taxonomic scope" value="Bacteria"/>
</dbReference>
<dbReference type="HOGENOM" id="CLU_030231_0_1_3"/>
<dbReference type="OrthoDB" id="9809970at2"/>
<dbReference type="PhylomeDB" id="B2IZ89"/>
<dbReference type="UniPathway" id="UPA00098">
    <property type="reaction ID" value="UER00360"/>
</dbReference>
<dbReference type="Proteomes" id="UP000001191">
    <property type="component" value="Chromosome"/>
</dbReference>
<dbReference type="GO" id="GO:0005737">
    <property type="term" value="C:cytoplasm"/>
    <property type="evidence" value="ECO:0007669"/>
    <property type="project" value="UniProtKB-SubCell"/>
</dbReference>
<dbReference type="GO" id="GO:0004350">
    <property type="term" value="F:glutamate-5-semialdehyde dehydrogenase activity"/>
    <property type="evidence" value="ECO:0007669"/>
    <property type="project" value="UniProtKB-UniRule"/>
</dbReference>
<dbReference type="GO" id="GO:0050661">
    <property type="term" value="F:NADP binding"/>
    <property type="evidence" value="ECO:0007669"/>
    <property type="project" value="InterPro"/>
</dbReference>
<dbReference type="GO" id="GO:0055129">
    <property type="term" value="P:L-proline biosynthetic process"/>
    <property type="evidence" value="ECO:0007669"/>
    <property type="project" value="UniProtKB-UniRule"/>
</dbReference>
<dbReference type="CDD" id="cd07079">
    <property type="entry name" value="ALDH_F18-19_ProA-GPR"/>
    <property type="match status" value="1"/>
</dbReference>
<dbReference type="FunFam" id="3.40.309.10:FF:000006">
    <property type="entry name" value="Gamma-glutamyl phosphate reductase"/>
    <property type="match status" value="1"/>
</dbReference>
<dbReference type="Gene3D" id="3.40.605.10">
    <property type="entry name" value="Aldehyde Dehydrogenase, Chain A, domain 1"/>
    <property type="match status" value="1"/>
</dbReference>
<dbReference type="Gene3D" id="3.40.309.10">
    <property type="entry name" value="Aldehyde Dehydrogenase, Chain A, domain 2"/>
    <property type="match status" value="1"/>
</dbReference>
<dbReference type="HAMAP" id="MF_00412">
    <property type="entry name" value="ProA"/>
    <property type="match status" value="1"/>
</dbReference>
<dbReference type="InterPro" id="IPR016161">
    <property type="entry name" value="Ald_DH/histidinol_DH"/>
</dbReference>
<dbReference type="InterPro" id="IPR016163">
    <property type="entry name" value="Ald_DH_C"/>
</dbReference>
<dbReference type="InterPro" id="IPR016162">
    <property type="entry name" value="Ald_DH_N"/>
</dbReference>
<dbReference type="InterPro" id="IPR015590">
    <property type="entry name" value="Aldehyde_DH_dom"/>
</dbReference>
<dbReference type="InterPro" id="IPR020593">
    <property type="entry name" value="G-glutamylP_reductase_CS"/>
</dbReference>
<dbReference type="InterPro" id="IPR012134">
    <property type="entry name" value="Glu-5-SA_DH"/>
</dbReference>
<dbReference type="InterPro" id="IPR000965">
    <property type="entry name" value="GPR_dom"/>
</dbReference>
<dbReference type="NCBIfam" id="NF001221">
    <property type="entry name" value="PRK00197.1"/>
    <property type="match status" value="1"/>
</dbReference>
<dbReference type="NCBIfam" id="TIGR00407">
    <property type="entry name" value="proA"/>
    <property type="match status" value="1"/>
</dbReference>
<dbReference type="PANTHER" id="PTHR11063:SF8">
    <property type="entry name" value="DELTA-1-PYRROLINE-5-CARBOXYLATE SYNTHASE"/>
    <property type="match status" value="1"/>
</dbReference>
<dbReference type="PANTHER" id="PTHR11063">
    <property type="entry name" value="GLUTAMATE SEMIALDEHYDE DEHYDROGENASE"/>
    <property type="match status" value="1"/>
</dbReference>
<dbReference type="Pfam" id="PF00171">
    <property type="entry name" value="Aldedh"/>
    <property type="match status" value="1"/>
</dbReference>
<dbReference type="PIRSF" id="PIRSF000151">
    <property type="entry name" value="GPR"/>
    <property type="match status" value="1"/>
</dbReference>
<dbReference type="SUPFAM" id="SSF53720">
    <property type="entry name" value="ALDH-like"/>
    <property type="match status" value="1"/>
</dbReference>
<dbReference type="PROSITE" id="PS01223">
    <property type="entry name" value="PROA"/>
    <property type="match status" value="1"/>
</dbReference>
<protein>
    <recommendedName>
        <fullName evidence="1">Gamma-glutamyl phosphate reductase</fullName>
        <shortName evidence="1">GPR</shortName>
        <ecNumber evidence="1">1.2.1.41</ecNumber>
    </recommendedName>
    <alternativeName>
        <fullName evidence="1">Glutamate-5-semialdehyde dehydrogenase</fullName>
    </alternativeName>
    <alternativeName>
        <fullName evidence="1">Glutamyl-gamma-semialdehyde dehydrogenase</fullName>
        <shortName evidence="1">GSA dehydrogenase</shortName>
    </alternativeName>
</protein>
<gene>
    <name evidence="1" type="primary">proA</name>
    <name type="ordered locus">Npun_R6463</name>
</gene>
<evidence type="ECO:0000255" key="1">
    <source>
        <dbReference type="HAMAP-Rule" id="MF_00412"/>
    </source>
</evidence>
<sequence length="435" mass="47343">MTTFDIGSPLIAIAQKTRKAASKLAILSTEAKNQAIIAIAQALESAKDEILQANIADCEAANAEGIPKPLYKRLQLDEHKLRDAIVGVQDVGKLDDPVGKVQIHRELDTGLILKRITCPLGVLGIIFEARPEAAIQIASLAIKSGNGVILKCGKEAVRSCEAIVKAIKQGLSHTAVNPDTVQLLTTREETLELLKLDKYVDLIIPRGSNSFVRFVQENTRIPVLGHADGICHLYIDKAADISKAVPITVDAKAQYPAVCNAIETLLVHQSIATEFLPKVADALQERHVELRGDKRTLKILPNIVSATEIDWETEYSDYILSIKIVDSIEDAIAHINEYGSRHTDAIITEDSTSVETFFGLVNSANIFHNCSTRFADGFRYGFGAEVGISTQQMPPRGPVGLEGLVTYKYQMTGDGHIVATYTGANAKAFTHRDLV</sequence>
<reference key="1">
    <citation type="journal article" date="2013" name="Plant Physiol.">
        <title>A Nostoc punctiforme Sugar Transporter Necessary to Establish a Cyanobacterium-Plant Symbiosis.</title>
        <authorList>
            <person name="Ekman M."/>
            <person name="Picossi S."/>
            <person name="Campbell E.L."/>
            <person name="Meeks J.C."/>
            <person name="Flores E."/>
        </authorList>
    </citation>
    <scope>NUCLEOTIDE SEQUENCE [LARGE SCALE GENOMIC DNA]</scope>
    <source>
        <strain>ATCC 29133 / PCC 73102</strain>
    </source>
</reference>
<accession>B2IZ89</accession>
<comment type="function">
    <text evidence="1">Catalyzes the NADPH-dependent reduction of L-glutamate 5-phosphate into L-glutamate 5-semialdehyde and phosphate. The product spontaneously undergoes cyclization to form 1-pyrroline-5-carboxylate.</text>
</comment>
<comment type="catalytic activity">
    <reaction evidence="1">
        <text>L-glutamate 5-semialdehyde + phosphate + NADP(+) = L-glutamyl 5-phosphate + NADPH + H(+)</text>
        <dbReference type="Rhea" id="RHEA:19541"/>
        <dbReference type="ChEBI" id="CHEBI:15378"/>
        <dbReference type="ChEBI" id="CHEBI:43474"/>
        <dbReference type="ChEBI" id="CHEBI:57783"/>
        <dbReference type="ChEBI" id="CHEBI:58066"/>
        <dbReference type="ChEBI" id="CHEBI:58274"/>
        <dbReference type="ChEBI" id="CHEBI:58349"/>
        <dbReference type="EC" id="1.2.1.41"/>
    </reaction>
</comment>
<comment type="pathway">
    <text evidence="1">Amino-acid biosynthesis; L-proline biosynthesis; L-glutamate 5-semialdehyde from L-glutamate: step 2/2.</text>
</comment>
<comment type="subcellular location">
    <subcellularLocation>
        <location evidence="1">Cytoplasm</location>
    </subcellularLocation>
</comment>
<comment type="similarity">
    <text evidence="1">Belongs to the gamma-glutamyl phosphate reductase family.</text>
</comment>
<name>PROA_NOSP7</name>
<feature type="chain" id="PRO_1000193631" description="Gamma-glutamyl phosphate reductase">
    <location>
        <begin position="1"/>
        <end position="435"/>
    </location>
</feature>
<keyword id="KW-0028">Amino-acid biosynthesis</keyword>
<keyword id="KW-0963">Cytoplasm</keyword>
<keyword id="KW-0521">NADP</keyword>
<keyword id="KW-0560">Oxidoreductase</keyword>
<keyword id="KW-0641">Proline biosynthesis</keyword>
<keyword id="KW-1185">Reference proteome</keyword>